<dbReference type="EMBL" id="AE005174">
    <property type="protein sequence ID" value="AAG56778.1"/>
    <property type="molecule type" value="Genomic_DNA"/>
</dbReference>
<dbReference type="EMBL" id="BA000007">
    <property type="protein sequence ID" value="BAB35921.1"/>
    <property type="molecule type" value="Genomic_DNA"/>
</dbReference>
<dbReference type="PIR" id="B90941">
    <property type="entry name" value="B90941"/>
</dbReference>
<dbReference type="PIR" id="F85789">
    <property type="entry name" value="F85789"/>
</dbReference>
<dbReference type="RefSeq" id="NP_310525.1">
    <property type="nucleotide sequence ID" value="NC_002695.1"/>
</dbReference>
<dbReference type="RefSeq" id="WP_000460708.1">
    <property type="nucleotide sequence ID" value="NZ_VOAI01000010.1"/>
</dbReference>
<dbReference type="STRING" id="155864.Z2829"/>
<dbReference type="GeneID" id="913210"/>
<dbReference type="KEGG" id="ece:Z2829"/>
<dbReference type="KEGG" id="ecs:ECs_2498"/>
<dbReference type="PATRIC" id="fig|386585.9.peg.2615"/>
<dbReference type="eggNOG" id="COG2707">
    <property type="taxonomic scope" value="Bacteria"/>
</dbReference>
<dbReference type="HOGENOM" id="CLU_125889_0_0_6"/>
<dbReference type="OMA" id="SPAGWIA"/>
<dbReference type="Proteomes" id="UP000000558">
    <property type="component" value="Chromosome"/>
</dbReference>
<dbReference type="Proteomes" id="UP000002519">
    <property type="component" value="Chromosome"/>
</dbReference>
<dbReference type="GO" id="GO:0005886">
    <property type="term" value="C:plasma membrane"/>
    <property type="evidence" value="ECO:0007669"/>
    <property type="project" value="UniProtKB-SubCell"/>
</dbReference>
<dbReference type="HAMAP" id="MF_01874">
    <property type="entry name" value="UPF0756"/>
    <property type="match status" value="1"/>
</dbReference>
<dbReference type="InterPro" id="IPR007382">
    <property type="entry name" value="UPF0756_TM"/>
</dbReference>
<dbReference type="PANTHER" id="PTHR38452">
    <property type="entry name" value="UPF0756 MEMBRANE PROTEIN YEAL"/>
    <property type="match status" value="1"/>
</dbReference>
<dbReference type="PANTHER" id="PTHR38452:SF1">
    <property type="entry name" value="UPF0756 MEMBRANE PROTEIN YEAL"/>
    <property type="match status" value="1"/>
</dbReference>
<dbReference type="Pfam" id="PF04284">
    <property type="entry name" value="DUF441"/>
    <property type="match status" value="1"/>
</dbReference>
<gene>
    <name evidence="1" type="primary">yeaL</name>
    <name type="ordered locus">Z2829</name>
    <name type="ordered locus">ECs2498</name>
</gene>
<organism>
    <name type="scientific">Escherichia coli O157:H7</name>
    <dbReference type="NCBI Taxonomy" id="83334"/>
    <lineage>
        <taxon>Bacteria</taxon>
        <taxon>Pseudomonadati</taxon>
        <taxon>Pseudomonadota</taxon>
        <taxon>Gammaproteobacteria</taxon>
        <taxon>Enterobacterales</taxon>
        <taxon>Enterobacteriaceae</taxon>
        <taxon>Escherichia</taxon>
    </lineage>
</organism>
<accession>Q8XDT4</accession>
<accession>Q7ADB0</accession>
<sequence>MFDVTLLILLGLAALGFISHNTTVAVSILVLIIVRVTPLSTFFPWIEKQGLSIGIIILTIGVMAPIASGTLPPSTLIHSFLNWKSLVAIAVGVIVSWLGGRGVTLMGSQPQLVAGLLVGTVLGVALFRGVPVGPLIATGLVSLIVGKQ</sequence>
<feature type="chain" id="PRO_0000388864" description="UPF0756 membrane protein YeaL">
    <location>
        <begin position="1"/>
        <end position="148"/>
    </location>
</feature>
<feature type="transmembrane region" description="Helical" evidence="1">
    <location>
        <begin position="14"/>
        <end position="34"/>
    </location>
</feature>
<feature type="transmembrane region" description="Helical" evidence="1">
    <location>
        <begin position="51"/>
        <end position="71"/>
    </location>
</feature>
<feature type="transmembrane region" description="Helical" evidence="1">
    <location>
        <begin position="86"/>
        <end position="106"/>
    </location>
</feature>
<feature type="transmembrane region" description="Helical" evidence="1">
    <location>
        <begin position="112"/>
        <end position="132"/>
    </location>
</feature>
<keyword id="KW-1003">Cell membrane</keyword>
<keyword id="KW-0472">Membrane</keyword>
<keyword id="KW-1185">Reference proteome</keyword>
<keyword id="KW-0812">Transmembrane</keyword>
<keyword id="KW-1133">Transmembrane helix</keyword>
<reference key="1">
    <citation type="journal article" date="2001" name="Nature">
        <title>Genome sequence of enterohaemorrhagic Escherichia coli O157:H7.</title>
        <authorList>
            <person name="Perna N.T."/>
            <person name="Plunkett G. III"/>
            <person name="Burland V."/>
            <person name="Mau B."/>
            <person name="Glasner J.D."/>
            <person name="Rose D.J."/>
            <person name="Mayhew G.F."/>
            <person name="Evans P.S."/>
            <person name="Gregor J."/>
            <person name="Kirkpatrick H.A."/>
            <person name="Posfai G."/>
            <person name="Hackett J."/>
            <person name="Klink S."/>
            <person name="Boutin A."/>
            <person name="Shao Y."/>
            <person name="Miller L."/>
            <person name="Grotbeck E.J."/>
            <person name="Davis N.W."/>
            <person name="Lim A."/>
            <person name="Dimalanta E.T."/>
            <person name="Potamousis K."/>
            <person name="Apodaca J."/>
            <person name="Anantharaman T.S."/>
            <person name="Lin J."/>
            <person name="Yen G."/>
            <person name="Schwartz D.C."/>
            <person name="Welch R.A."/>
            <person name="Blattner F.R."/>
        </authorList>
    </citation>
    <scope>NUCLEOTIDE SEQUENCE [LARGE SCALE GENOMIC DNA]</scope>
    <source>
        <strain>O157:H7 / EDL933 / ATCC 700927 / EHEC</strain>
    </source>
</reference>
<reference key="2">
    <citation type="journal article" date="2001" name="DNA Res.">
        <title>Complete genome sequence of enterohemorrhagic Escherichia coli O157:H7 and genomic comparison with a laboratory strain K-12.</title>
        <authorList>
            <person name="Hayashi T."/>
            <person name="Makino K."/>
            <person name="Ohnishi M."/>
            <person name="Kurokawa K."/>
            <person name="Ishii K."/>
            <person name="Yokoyama K."/>
            <person name="Han C.-G."/>
            <person name="Ohtsubo E."/>
            <person name="Nakayama K."/>
            <person name="Murata T."/>
            <person name="Tanaka M."/>
            <person name="Tobe T."/>
            <person name="Iida T."/>
            <person name="Takami H."/>
            <person name="Honda T."/>
            <person name="Sasakawa C."/>
            <person name="Ogasawara N."/>
            <person name="Yasunaga T."/>
            <person name="Kuhara S."/>
            <person name="Shiba T."/>
            <person name="Hattori M."/>
            <person name="Shinagawa H."/>
        </authorList>
    </citation>
    <scope>NUCLEOTIDE SEQUENCE [LARGE SCALE GENOMIC DNA]</scope>
    <source>
        <strain>O157:H7 / Sakai / RIMD 0509952 / EHEC</strain>
    </source>
</reference>
<evidence type="ECO:0000255" key="1">
    <source>
        <dbReference type="HAMAP-Rule" id="MF_01874"/>
    </source>
</evidence>
<name>YEAL_ECO57</name>
<protein>
    <recommendedName>
        <fullName evidence="1">UPF0756 membrane protein YeaL</fullName>
    </recommendedName>
</protein>
<proteinExistence type="inferred from homology"/>
<comment type="subcellular location">
    <subcellularLocation>
        <location evidence="1">Cell membrane</location>
        <topology evidence="1">Multi-pass membrane protein</topology>
    </subcellularLocation>
</comment>
<comment type="similarity">
    <text evidence="1">Belongs to the UPF0756 family.</text>
</comment>